<dbReference type="EC" id="3.1.-.-" evidence="1"/>
<dbReference type="EMBL" id="AE009951">
    <property type="protein sequence ID" value="AAL95372.1"/>
    <property type="molecule type" value="Genomic_DNA"/>
</dbReference>
<dbReference type="RefSeq" id="NP_604073.1">
    <property type="nucleotide sequence ID" value="NC_003454.1"/>
</dbReference>
<dbReference type="RefSeq" id="WP_005903132.1">
    <property type="nucleotide sequence ID" value="NZ_OZ209243.1"/>
</dbReference>
<dbReference type="SMR" id="Q8RED2"/>
<dbReference type="STRING" id="190304.FN1176"/>
<dbReference type="PaxDb" id="190304-FN1176"/>
<dbReference type="EnsemblBacteria" id="AAL95372">
    <property type="protein sequence ID" value="AAL95372"/>
    <property type="gene ID" value="FN1176"/>
</dbReference>
<dbReference type="GeneID" id="79784154"/>
<dbReference type="KEGG" id="fnu:FN1176"/>
<dbReference type="PATRIC" id="fig|190304.8.peg.1740"/>
<dbReference type="eggNOG" id="COG1343">
    <property type="taxonomic scope" value="Bacteria"/>
</dbReference>
<dbReference type="HOGENOM" id="CLU_161124_0_1_0"/>
<dbReference type="InParanoid" id="Q8RED2"/>
<dbReference type="BioCyc" id="FNUC190304:G1FZS-1754-MONOMER"/>
<dbReference type="Proteomes" id="UP000002521">
    <property type="component" value="Chromosome"/>
</dbReference>
<dbReference type="GO" id="GO:0046872">
    <property type="term" value="F:metal ion binding"/>
    <property type="evidence" value="ECO:0007669"/>
    <property type="project" value="UniProtKB-UniRule"/>
</dbReference>
<dbReference type="GO" id="GO:0004521">
    <property type="term" value="F:RNA endonuclease activity"/>
    <property type="evidence" value="ECO:0007669"/>
    <property type="project" value="InterPro"/>
</dbReference>
<dbReference type="GO" id="GO:0051607">
    <property type="term" value="P:defense response to virus"/>
    <property type="evidence" value="ECO:0007669"/>
    <property type="project" value="UniProtKB-UniRule"/>
</dbReference>
<dbReference type="GO" id="GO:0043571">
    <property type="term" value="P:maintenance of CRISPR repeat elements"/>
    <property type="evidence" value="ECO:0007669"/>
    <property type="project" value="UniProtKB-UniRule"/>
</dbReference>
<dbReference type="CDD" id="cd09725">
    <property type="entry name" value="Cas2_I_II_III"/>
    <property type="match status" value="1"/>
</dbReference>
<dbReference type="Gene3D" id="3.30.70.240">
    <property type="match status" value="1"/>
</dbReference>
<dbReference type="HAMAP" id="MF_01471">
    <property type="entry name" value="Cas2"/>
    <property type="match status" value="1"/>
</dbReference>
<dbReference type="InterPro" id="IPR021127">
    <property type="entry name" value="CRISPR_associated_Cas2"/>
</dbReference>
<dbReference type="InterPro" id="IPR019199">
    <property type="entry name" value="Virulence_VapD/CRISPR_Cas2"/>
</dbReference>
<dbReference type="NCBIfam" id="TIGR01573">
    <property type="entry name" value="cas2"/>
    <property type="match status" value="1"/>
</dbReference>
<dbReference type="PANTHER" id="PTHR34405">
    <property type="entry name" value="CRISPR-ASSOCIATED ENDORIBONUCLEASE CAS2"/>
    <property type="match status" value="1"/>
</dbReference>
<dbReference type="PANTHER" id="PTHR34405:SF1">
    <property type="entry name" value="CRISPR-ASSOCIATED ENDORIBONUCLEASE CAS2"/>
    <property type="match status" value="1"/>
</dbReference>
<dbReference type="Pfam" id="PF09827">
    <property type="entry name" value="CRISPR_Cas2"/>
    <property type="match status" value="1"/>
</dbReference>
<dbReference type="SUPFAM" id="SSF143430">
    <property type="entry name" value="TTP0101/SSO1404-like"/>
    <property type="match status" value="1"/>
</dbReference>
<proteinExistence type="inferred from homology"/>
<feature type="chain" id="PRO_0000417714" description="CRISPR-associated endoribonuclease Cas2">
    <location>
        <begin position="1"/>
        <end position="106"/>
    </location>
</feature>
<feature type="binding site" evidence="1">
    <location>
        <position position="22"/>
    </location>
    <ligand>
        <name>Mg(2+)</name>
        <dbReference type="ChEBI" id="CHEBI:18420"/>
        <note>catalytic</note>
    </ligand>
</feature>
<sequence length="106" mass="12805">MKRNINLFKCGGDKMYVVVVYDISLDEKGSRNWRKIFGICKRYLHHIQNSVFEGELSEVDIQRLKYEVSKYIRDDLDSFIIFKSRNERWMEKEMLGLQEDKTDNFL</sequence>
<keyword id="KW-0051">Antiviral defense</keyword>
<keyword id="KW-0255">Endonuclease</keyword>
<keyword id="KW-0378">Hydrolase</keyword>
<keyword id="KW-0460">Magnesium</keyword>
<keyword id="KW-0479">Metal-binding</keyword>
<keyword id="KW-0540">Nuclease</keyword>
<keyword id="KW-1185">Reference proteome</keyword>
<accession>Q8RED2</accession>
<gene>
    <name evidence="1" type="primary">cas2</name>
    <name type="ordered locus">FN1176</name>
</gene>
<reference key="1">
    <citation type="journal article" date="2002" name="J. Bacteriol.">
        <title>Genome sequence and analysis of the oral bacterium Fusobacterium nucleatum strain ATCC 25586.</title>
        <authorList>
            <person name="Kapatral V."/>
            <person name="Anderson I."/>
            <person name="Ivanova N."/>
            <person name="Reznik G."/>
            <person name="Los T."/>
            <person name="Lykidis A."/>
            <person name="Bhattacharyya A."/>
            <person name="Bartman A."/>
            <person name="Gardner W."/>
            <person name="Grechkin G."/>
            <person name="Zhu L."/>
            <person name="Vasieva O."/>
            <person name="Chu L."/>
            <person name="Kogan Y."/>
            <person name="Chaga O."/>
            <person name="Goltsman E."/>
            <person name="Bernal A."/>
            <person name="Larsen N."/>
            <person name="D'Souza M."/>
            <person name="Walunas T."/>
            <person name="Pusch G."/>
            <person name="Haselkorn R."/>
            <person name="Fonstein M."/>
            <person name="Kyrpides N.C."/>
            <person name="Overbeek R."/>
        </authorList>
    </citation>
    <scope>NUCLEOTIDE SEQUENCE [LARGE SCALE GENOMIC DNA]</scope>
    <source>
        <strain>ATCC 25586 / DSM 15643 / BCRC 10681 / CIP 101130 / JCM 8532 / KCTC 2640 / LMG 13131 / VPI 4355</strain>
    </source>
</reference>
<comment type="function">
    <text evidence="1">CRISPR (clustered regularly interspaced short palindromic repeat), is an adaptive immune system that provides protection against mobile genetic elements (viruses, transposable elements and conjugative plasmids). CRISPR clusters contain sequences complementary to antecedent mobile elements and target invading nucleic acids. CRISPR clusters are transcribed and processed into CRISPR RNA (crRNA). Functions as a ssRNA-specific endoribonuclease. Involved in the integration of spacer DNA into the CRISPR cassette.</text>
</comment>
<comment type="cofactor">
    <cofactor evidence="1">
        <name>Mg(2+)</name>
        <dbReference type="ChEBI" id="CHEBI:18420"/>
    </cofactor>
</comment>
<comment type="subunit">
    <text evidence="1">Homodimer, forms a heterotetramer with a Cas1 homodimer.</text>
</comment>
<comment type="similarity">
    <text evidence="1">Belongs to the CRISPR-associated endoribonuclease Cas2 protein family.</text>
</comment>
<name>CAS2_FUSNN</name>
<protein>
    <recommendedName>
        <fullName evidence="1">CRISPR-associated endoribonuclease Cas2</fullName>
        <ecNumber evidence="1">3.1.-.-</ecNumber>
    </recommendedName>
</protein>
<evidence type="ECO:0000255" key="1">
    <source>
        <dbReference type="HAMAP-Rule" id="MF_01471"/>
    </source>
</evidence>
<organism>
    <name type="scientific">Fusobacterium nucleatum subsp. nucleatum (strain ATCC 25586 / DSM 15643 / BCRC 10681 / CIP 101130 / JCM 8532 / KCTC 2640 / LMG 13131 / VPI 4355)</name>
    <dbReference type="NCBI Taxonomy" id="190304"/>
    <lineage>
        <taxon>Bacteria</taxon>
        <taxon>Fusobacteriati</taxon>
        <taxon>Fusobacteriota</taxon>
        <taxon>Fusobacteriia</taxon>
        <taxon>Fusobacteriales</taxon>
        <taxon>Fusobacteriaceae</taxon>
        <taxon>Fusobacterium</taxon>
    </lineage>
</organism>